<organism>
    <name type="scientific">Ralstonia nicotianae (strain ATCC BAA-1114 / GMI1000)</name>
    <name type="common">Ralstonia solanacearum</name>
    <dbReference type="NCBI Taxonomy" id="267608"/>
    <lineage>
        <taxon>Bacteria</taxon>
        <taxon>Pseudomonadati</taxon>
        <taxon>Pseudomonadota</taxon>
        <taxon>Betaproteobacteria</taxon>
        <taxon>Burkholderiales</taxon>
        <taxon>Burkholderiaceae</taxon>
        <taxon>Ralstonia</taxon>
        <taxon>Ralstonia solanacearum species complex</taxon>
    </lineage>
</organism>
<keyword id="KW-0963">Cytoplasm</keyword>
<keyword id="KW-0378">Hydrolase</keyword>
<keyword id="KW-0520">NAD</keyword>
<keyword id="KW-0554">One-carbon metabolism</keyword>
<keyword id="KW-1185">Reference proteome</keyword>
<reference key="1">
    <citation type="journal article" date="2002" name="Nature">
        <title>Genome sequence of the plant pathogen Ralstonia solanacearum.</title>
        <authorList>
            <person name="Salanoubat M."/>
            <person name="Genin S."/>
            <person name="Artiguenave F."/>
            <person name="Gouzy J."/>
            <person name="Mangenot S."/>
            <person name="Arlat M."/>
            <person name="Billault A."/>
            <person name="Brottier P."/>
            <person name="Camus J.-C."/>
            <person name="Cattolico L."/>
            <person name="Chandler M."/>
            <person name="Choisne N."/>
            <person name="Claudel-Renard C."/>
            <person name="Cunnac S."/>
            <person name="Demange N."/>
            <person name="Gaspin C."/>
            <person name="Lavie M."/>
            <person name="Moisan A."/>
            <person name="Robert C."/>
            <person name="Saurin W."/>
            <person name="Schiex T."/>
            <person name="Siguier P."/>
            <person name="Thebault P."/>
            <person name="Whalen M."/>
            <person name="Wincker P."/>
            <person name="Levy M."/>
            <person name="Weissenbach J."/>
            <person name="Boucher C.A."/>
        </authorList>
    </citation>
    <scope>NUCLEOTIDE SEQUENCE [LARGE SCALE GENOMIC DNA]</scope>
    <source>
        <strain>ATCC BAA-1114 / GMI1000</strain>
    </source>
</reference>
<feature type="chain" id="PRO_0000116979" description="Adenosylhomocysteinase">
    <location>
        <begin position="1"/>
        <end position="474"/>
    </location>
</feature>
<feature type="binding site" evidence="1">
    <location>
        <position position="61"/>
    </location>
    <ligand>
        <name>substrate</name>
    </ligand>
</feature>
<feature type="binding site" evidence="1">
    <location>
        <position position="136"/>
    </location>
    <ligand>
        <name>substrate</name>
    </ligand>
</feature>
<feature type="binding site" evidence="1">
    <location>
        <position position="196"/>
    </location>
    <ligand>
        <name>substrate</name>
    </ligand>
</feature>
<feature type="binding site" evidence="1">
    <location>
        <begin position="197"/>
        <end position="199"/>
    </location>
    <ligand>
        <name>NAD(+)</name>
        <dbReference type="ChEBI" id="CHEBI:57540"/>
    </ligand>
</feature>
<feature type="binding site" evidence="1">
    <location>
        <position position="226"/>
    </location>
    <ligand>
        <name>substrate</name>
    </ligand>
</feature>
<feature type="binding site" evidence="1">
    <location>
        <position position="230"/>
    </location>
    <ligand>
        <name>substrate</name>
    </ligand>
</feature>
<feature type="binding site" evidence="1">
    <location>
        <position position="231"/>
    </location>
    <ligand>
        <name>NAD(+)</name>
        <dbReference type="ChEBI" id="CHEBI:57540"/>
    </ligand>
</feature>
<feature type="binding site" evidence="1">
    <location>
        <begin position="260"/>
        <end position="265"/>
    </location>
    <ligand>
        <name>NAD(+)</name>
        <dbReference type="ChEBI" id="CHEBI:57540"/>
    </ligand>
</feature>
<feature type="binding site" evidence="1">
    <location>
        <position position="283"/>
    </location>
    <ligand>
        <name>NAD(+)</name>
        <dbReference type="ChEBI" id="CHEBI:57540"/>
    </ligand>
</feature>
<feature type="binding site" evidence="1">
    <location>
        <position position="318"/>
    </location>
    <ligand>
        <name>NAD(+)</name>
        <dbReference type="ChEBI" id="CHEBI:57540"/>
    </ligand>
</feature>
<feature type="binding site" evidence="1">
    <location>
        <begin position="339"/>
        <end position="341"/>
    </location>
    <ligand>
        <name>NAD(+)</name>
        <dbReference type="ChEBI" id="CHEBI:57540"/>
    </ligand>
</feature>
<feature type="binding site" evidence="1">
    <location>
        <position position="384"/>
    </location>
    <ligand>
        <name>NAD(+)</name>
        <dbReference type="ChEBI" id="CHEBI:57540"/>
    </ligand>
</feature>
<evidence type="ECO:0000255" key="1">
    <source>
        <dbReference type="HAMAP-Rule" id="MF_00563"/>
    </source>
</evidence>
<gene>
    <name evidence="1" type="primary">ahcY</name>
    <name type="ordered locus">RSc0093</name>
    <name type="ORF">RS02265</name>
</gene>
<proteinExistence type="inferred from homology"/>
<comment type="function">
    <text evidence="1">May play a key role in the regulation of the intracellular concentration of adenosylhomocysteine.</text>
</comment>
<comment type="catalytic activity">
    <reaction evidence="1">
        <text>S-adenosyl-L-homocysteine + H2O = L-homocysteine + adenosine</text>
        <dbReference type="Rhea" id="RHEA:21708"/>
        <dbReference type="ChEBI" id="CHEBI:15377"/>
        <dbReference type="ChEBI" id="CHEBI:16335"/>
        <dbReference type="ChEBI" id="CHEBI:57856"/>
        <dbReference type="ChEBI" id="CHEBI:58199"/>
        <dbReference type="EC" id="3.13.2.1"/>
    </reaction>
</comment>
<comment type="cofactor">
    <cofactor evidence="1">
        <name>NAD(+)</name>
        <dbReference type="ChEBI" id="CHEBI:57540"/>
    </cofactor>
    <text evidence="1">Binds 1 NAD(+) per subunit.</text>
</comment>
<comment type="pathway">
    <text evidence="1">Amino-acid biosynthesis; L-homocysteine biosynthesis; L-homocysteine from S-adenosyl-L-homocysteine: step 1/1.</text>
</comment>
<comment type="subcellular location">
    <subcellularLocation>
        <location evidence="1">Cytoplasm</location>
    </subcellularLocation>
</comment>
<comment type="similarity">
    <text evidence="1">Belongs to the adenosylhomocysteinase family.</text>
</comment>
<dbReference type="EC" id="3.13.2.1" evidence="1"/>
<dbReference type="EMBL" id="AL646052">
    <property type="protein sequence ID" value="CAD13621.1"/>
    <property type="molecule type" value="Genomic_DNA"/>
</dbReference>
<dbReference type="RefSeq" id="WP_011000060.1">
    <property type="nucleotide sequence ID" value="NC_003295.1"/>
</dbReference>
<dbReference type="SMR" id="Q8Y387"/>
<dbReference type="STRING" id="267608.RSc0093"/>
<dbReference type="EnsemblBacteria" id="CAD13621">
    <property type="protein sequence ID" value="CAD13621"/>
    <property type="gene ID" value="RSc0093"/>
</dbReference>
<dbReference type="KEGG" id="rso:RSc0093"/>
<dbReference type="eggNOG" id="COG0499">
    <property type="taxonomic scope" value="Bacteria"/>
</dbReference>
<dbReference type="HOGENOM" id="CLU_025194_2_1_4"/>
<dbReference type="UniPathway" id="UPA00314">
    <property type="reaction ID" value="UER00076"/>
</dbReference>
<dbReference type="Proteomes" id="UP000001436">
    <property type="component" value="Chromosome"/>
</dbReference>
<dbReference type="GO" id="GO:0005829">
    <property type="term" value="C:cytosol"/>
    <property type="evidence" value="ECO:0007669"/>
    <property type="project" value="TreeGrafter"/>
</dbReference>
<dbReference type="GO" id="GO:0004013">
    <property type="term" value="F:adenosylhomocysteinase activity"/>
    <property type="evidence" value="ECO:0007669"/>
    <property type="project" value="UniProtKB-UniRule"/>
</dbReference>
<dbReference type="GO" id="GO:0071269">
    <property type="term" value="P:L-homocysteine biosynthetic process"/>
    <property type="evidence" value="ECO:0007669"/>
    <property type="project" value="UniProtKB-UniRule"/>
</dbReference>
<dbReference type="GO" id="GO:0006730">
    <property type="term" value="P:one-carbon metabolic process"/>
    <property type="evidence" value="ECO:0007669"/>
    <property type="project" value="UniProtKB-KW"/>
</dbReference>
<dbReference type="GO" id="GO:0033353">
    <property type="term" value="P:S-adenosylmethionine cycle"/>
    <property type="evidence" value="ECO:0007669"/>
    <property type="project" value="TreeGrafter"/>
</dbReference>
<dbReference type="CDD" id="cd00401">
    <property type="entry name" value="SAHH"/>
    <property type="match status" value="1"/>
</dbReference>
<dbReference type="FunFam" id="3.40.50.720:FF:000004">
    <property type="entry name" value="Adenosylhomocysteinase"/>
    <property type="match status" value="1"/>
</dbReference>
<dbReference type="Gene3D" id="3.40.50.1480">
    <property type="entry name" value="Adenosylhomocysteinase-like"/>
    <property type="match status" value="1"/>
</dbReference>
<dbReference type="Gene3D" id="3.40.50.720">
    <property type="entry name" value="NAD(P)-binding Rossmann-like Domain"/>
    <property type="match status" value="1"/>
</dbReference>
<dbReference type="HAMAP" id="MF_00563">
    <property type="entry name" value="AdoHcyase"/>
    <property type="match status" value="1"/>
</dbReference>
<dbReference type="InterPro" id="IPR042172">
    <property type="entry name" value="Adenosylhomocyst_ase-like_sf"/>
</dbReference>
<dbReference type="InterPro" id="IPR000043">
    <property type="entry name" value="Adenosylhomocysteinase-like"/>
</dbReference>
<dbReference type="InterPro" id="IPR015878">
    <property type="entry name" value="Ado_hCys_hydrolase_NAD-bd"/>
</dbReference>
<dbReference type="InterPro" id="IPR036291">
    <property type="entry name" value="NAD(P)-bd_dom_sf"/>
</dbReference>
<dbReference type="InterPro" id="IPR020082">
    <property type="entry name" value="S-Ado-L-homoCys_hydrolase_CS"/>
</dbReference>
<dbReference type="NCBIfam" id="TIGR00936">
    <property type="entry name" value="ahcY"/>
    <property type="match status" value="1"/>
</dbReference>
<dbReference type="NCBIfam" id="NF004005">
    <property type="entry name" value="PRK05476.2-3"/>
    <property type="match status" value="1"/>
</dbReference>
<dbReference type="PANTHER" id="PTHR23420">
    <property type="entry name" value="ADENOSYLHOMOCYSTEINASE"/>
    <property type="match status" value="1"/>
</dbReference>
<dbReference type="PANTHER" id="PTHR23420:SF0">
    <property type="entry name" value="ADENOSYLHOMOCYSTEINASE"/>
    <property type="match status" value="1"/>
</dbReference>
<dbReference type="Pfam" id="PF05221">
    <property type="entry name" value="AdoHcyase"/>
    <property type="match status" value="1"/>
</dbReference>
<dbReference type="Pfam" id="PF00670">
    <property type="entry name" value="AdoHcyase_NAD"/>
    <property type="match status" value="1"/>
</dbReference>
<dbReference type="PIRSF" id="PIRSF001109">
    <property type="entry name" value="Ad_hcy_hydrolase"/>
    <property type="match status" value="1"/>
</dbReference>
<dbReference type="SMART" id="SM00996">
    <property type="entry name" value="AdoHcyase"/>
    <property type="match status" value="1"/>
</dbReference>
<dbReference type="SMART" id="SM00997">
    <property type="entry name" value="AdoHcyase_NAD"/>
    <property type="match status" value="1"/>
</dbReference>
<dbReference type="SUPFAM" id="SSF52283">
    <property type="entry name" value="Formate/glycerate dehydrogenase catalytic domain-like"/>
    <property type="match status" value="1"/>
</dbReference>
<dbReference type="SUPFAM" id="SSF51735">
    <property type="entry name" value="NAD(P)-binding Rossmann-fold domains"/>
    <property type="match status" value="1"/>
</dbReference>
<dbReference type="PROSITE" id="PS00738">
    <property type="entry name" value="ADOHCYASE_1"/>
    <property type="match status" value="1"/>
</dbReference>
<dbReference type="PROSITE" id="PS00739">
    <property type="entry name" value="ADOHCYASE_2"/>
    <property type="match status" value="1"/>
</dbReference>
<accession>Q8Y387</accession>
<protein>
    <recommendedName>
        <fullName evidence="1">Adenosylhomocysteinase</fullName>
        <ecNumber evidence="1">3.13.2.1</ecNumber>
    </recommendedName>
    <alternativeName>
        <fullName evidence="1">S-adenosyl-L-homocysteine hydrolase</fullName>
        <shortName evidence="1">AdoHcyase</shortName>
    </alternativeName>
</protein>
<name>SAHH_RALN1</name>
<sequence length="474" mass="51949">MNAVTDLKHDYLVADIKLADWGRKEIAIAETEMPGLMAIRDEFAASQPLKGARIAGSLHMTIQTAVLIETLKALGADVRWASCNIFSTQDHAAAAIAASGTPVFAFKGESLKEYWDFTHRIFEWADGGTPNMILDDGGDATLLLHLGAKAEQDASVIAKPGSEEETFLFAAIKEKLAKDATFYSRNLDAIKGVTEETTTGVHRLYQMAQRGELRFPAINVNDSVTKSKFDNLYGCRESLVDGIKRATDVMIAGKVAVVAGYGDVGKGSAQALRALSAQVWVTEIDPICALQAAMEGYRVVTMDYAAEHGDIFVTCTGNYHVITHDHMAKMKDQAIVCNIGHFDNEIDIASVEQYQWEEIKPQVDHVIFPDGKKIIILAKGRLVNLGCATGHPSYVMSSSFANQTIAQIELWTEAQKGSSKYPVGVYTLPKHLDEKVARLQLKKLNAQLTVLTDKQAAYIGVSKEGPYKADHYRY</sequence>